<reference key="1">
    <citation type="journal article" date="2009" name="J. Bacteriol.">
        <title>Purine utilization by Klebsiella oxytoca M5al: genes for ring-oxidizing and -opening enzymes.</title>
        <authorList>
            <person name="Pope S.D."/>
            <person name="Chen L.L."/>
            <person name="Stewart V."/>
        </authorList>
    </citation>
    <scope>NUCLEOTIDE SEQUENCE [GENOMIC DNA]</scope>
    <scope>FUNCTION</scope>
    <scope>PATHWAY</scope>
    <scope>DISRUPTION PHENOTYPE</scope>
    <source>
        <strain>M5a1</strain>
    </source>
</reference>
<name>HPXO_KLEOX</name>
<gene>
    <name type="primary">hpxO</name>
</gene>
<keyword id="KW-0274">FAD</keyword>
<keyword id="KW-0285">Flavoprotein</keyword>
<keyword id="KW-0503">Monooxygenase</keyword>
<keyword id="KW-0520">NAD</keyword>
<keyword id="KW-0560">Oxidoreductase</keyword>
<keyword id="KW-0659">Purine metabolism</keyword>
<feature type="chain" id="PRO_0000418846" description="FAD-dependent urate hydroxylase">
    <location>
        <begin position="1"/>
        <end position="384"/>
    </location>
</feature>
<feature type="binding site" evidence="1">
    <location>
        <position position="11"/>
    </location>
    <ligand>
        <name>FAD</name>
        <dbReference type="ChEBI" id="CHEBI:57692"/>
    </ligand>
</feature>
<feature type="binding site" evidence="1">
    <location>
        <begin position="30"/>
        <end position="31"/>
    </location>
    <ligand>
        <name>FAD</name>
        <dbReference type="ChEBI" id="CHEBI:57692"/>
    </ligand>
</feature>
<feature type="binding site" evidence="1">
    <location>
        <position position="43"/>
    </location>
    <ligand>
        <name>FAD</name>
        <dbReference type="ChEBI" id="CHEBI:57692"/>
    </ligand>
</feature>
<feature type="binding site" evidence="1">
    <location>
        <position position="125"/>
    </location>
    <ligand>
        <name>FAD</name>
        <dbReference type="ChEBI" id="CHEBI:57692"/>
    </ligand>
</feature>
<feature type="binding site" evidence="1">
    <location>
        <position position="178"/>
    </location>
    <ligand>
        <name>substrate</name>
    </ligand>
</feature>
<feature type="binding site" evidence="1">
    <location>
        <position position="204"/>
    </location>
    <ligand>
        <name>substrate</name>
    </ligand>
</feature>
<feature type="binding site" evidence="1">
    <location>
        <begin position="216"/>
        <end position="218"/>
    </location>
    <ligand>
        <name>substrate</name>
    </ligand>
</feature>
<feature type="binding site" evidence="1">
    <location>
        <position position="285"/>
    </location>
    <ligand>
        <name>FAD</name>
        <dbReference type="ChEBI" id="CHEBI:57692"/>
    </ligand>
</feature>
<feature type="binding site" evidence="1">
    <location>
        <begin position="295"/>
        <end position="299"/>
    </location>
    <ligand>
        <name>FAD</name>
        <dbReference type="ChEBI" id="CHEBI:57692"/>
    </ligand>
</feature>
<feature type="site" description="Involved in substrate activation for the transfer of oxygen from the flavin hydroperoxide" evidence="1">
    <location>
        <position position="204"/>
    </location>
</feature>
<comment type="function">
    <text evidence="4">Catalyzes the hydroxylation of uric acid to 5-hydroxyisourate.</text>
</comment>
<comment type="catalytic activity">
    <reaction evidence="1">
        <text>urate + NADH + O2 + H(+) = 5-hydroxyisourate + NAD(+) + H2O</text>
        <dbReference type="Rhea" id="RHEA:27329"/>
        <dbReference type="ChEBI" id="CHEBI:15377"/>
        <dbReference type="ChEBI" id="CHEBI:15378"/>
        <dbReference type="ChEBI" id="CHEBI:15379"/>
        <dbReference type="ChEBI" id="CHEBI:17775"/>
        <dbReference type="ChEBI" id="CHEBI:18072"/>
        <dbReference type="ChEBI" id="CHEBI:57540"/>
        <dbReference type="ChEBI" id="CHEBI:57945"/>
        <dbReference type="EC" id="1.14.13.113"/>
    </reaction>
</comment>
<comment type="cofactor">
    <cofactor evidence="1">
        <name>FAD</name>
        <dbReference type="ChEBI" id="CHEBI:57692"/>
    </cofactor>
</comment>
<comment type="pathway">
    <text evidence="2">Purine metabolism; urate degradation.</text>
</comment>
<comment type="disruption phenotype">
    <text evidence="2">Mutants fail to grow with hypoxanthine, xanthine or urate as the sole nitrogen source, but can grow with allantoin and allantoate.</text>
</comment>
<comment type="similarity">
    <text evidence="3">Belongs to the FAD-dependent urate hydroxylase family.</text>
</comment>
<protein>
    <recommendedName>
        <fullName>FAD-dependent urate hydroxylase</fullName>
        <ecNumber>1.14.13.113</ecNumber>
    </recommendedName>
</protein>
<accession>B5B0J6</accession>
<evidence type="ECO:0000250" key="1">
    <source>
        <dbReference type="UniProtKB" id="A6T923"/>
    </source>
</evidence>
<evidence type="ECO:0000269" key="2">
    <source>
    </source>
</evidence>
<evidence type="ECO:0000305" key="3"/>
<evidence type="ECO:0000305" key="4">
    <source>
    </source>
</evidence>
<proteinExistence type="inferred from homology"/>
<dbReference type="EC" id="1.14.13.113"/>
<dbReference type="EMBL" id="EU884423">
    <property type="protein sequence ID" value="ACG63335.1"/>
    <property type="molecule type" value="Genomic_DNA"/>
</dbReference>
<dbReference type="SMR" id="B5B0J6"/>
<dbReference type="STRING" id="571.AB185_25405"/>
<dbReference type="eggNOG" id="COG0654">
    <property type="taxonomic scope" value="Bacteria"/>
</dbReference>
<dbReference type="BRENDA" id="1.14.13.113">
    <property type="organism ID" value="2811"/>
</dbReference>
<dbReference type="UniPathway" id="UPA00394"/>
<dbReference type="GO" id="GO:0071949">
    <property type="term" value="F:FAD binding"/>
    <property type="evidence" value="ECO:0000250"/>
    <property type="project" value="UniProtKB"/>
</dbReference>
<dbReference type="GO" id="GO:0102099">
    <property type="term" value="F:FAD-dependent urate hydroxylase activity"/>
    <property type="evidence" value="ECO:0007669"/>
    <property type="project" value="UniProtKB-EC"/>
</dbReference>
<dbReference type="GO" id="GO:0016709">
    <property type="term" value="F:oxidoreductase activity, acting on paired donors, with incorporation or reduction of molecular oxygen, NAD(P)H as one donor, and incorporation of one atom of oxygen"/>
    <property type="evidence" value="ECO:0000250"/>
    <property type="project" value="UniProtKB"/>
</dbReference>
<dbReference type="GO" id="GO:0004846">
    <property type="term" value="F:urate oxidase activity"/>
    <property type="evidence" value="ECO:0007669"/>
    <property type="project" value="InterPro"/>
</dbReference>
<dbReference type="GO" id="GO:0006144">
    <property type="term" value="P:purine nucleobase metabolic process"/>
    <property type="evidence" value="ECO:0007669"/>
    <property type="project" value="UniProtKB-KW"/>
</dbReference>
<dbReference type="GO" id="GO:0019628">
    <property type="term" value="P:urate catabolic process"/>
    <property type="evidence" value="ECO:0000250"/>
    <property type="project" value="UniProtKB"/>
</dbReference>
<dbReference type="FunFam" id="3.50.50.60:FF:000269">
    <property type="entry name" value="FAD-dependent urate hydroxylase"/>
    <property type="match status" value="1"/>
</dbReference>
<dbReference type="Gene3D" id="3.50.50.60">
    <property type="entry name" value="FAD/NAD(P)-binding domain"/>
    <property type="match status" value="1"/>
</dbReference>
<dbReference type="InterPro" id="IPR002938">
    <property type="entry name" value="FAD-bd"/>
</dbReference>
<dbReference type="InterPro" id="IPR050493">
    <property type="entry name" value="FAD-dep_Monooxygenase_BioMet"/>
</dbReference>
<dbReference type="InterPro" id="IPR036188">
    <property type="entry name" value="FAD/NAD-bd_sf"/>
</dbReference>
<dbReference type="InterPro" id="IPR047712">
    <property type="entry name" value="HpxO"/>
</dbReference>
<dbReference type="NCBIfam" id="NF033623">
    <property type="entry name" value="urate_HpxO"/>
    <property type="match status" value="1"/>
</dbReference>
<dbReference type="PANTHER" id="PTHR13789">
    <property type="entry name" value="MONOOXYGENASE"/>
    <property type="match status" value="1"/>
</dbReference>
<dbReference type="PANTHER" id="PTHR13789:SF309">
    <property type="entry name" value="PUTATIVE (AFU_ORTHOLOGUE AFUA_6G14510)-RELATED"/>
    <property type="match status" value="1"/>
</dbReference>
<dbReference type="Pfam" id="PF01494">
    <property type="entry name" value="FAD_binding_3"/>
    <property type="match status" value="1"/>
</dbReference>
<dbReference type="PRINTS" id="PR00420">
    <property type="entry name" value="RNGMNOXGNASE"/>
</dbReference>
<dbReference type="SUPFAM" id="SSF51905">
    <property type="entry name" value="FAD/NAD(P)-binding domain"/>
    <property type="match status" value="1"/>
</dbReference>
<sequence length="384" mass="42130">MKALVIGGGIGGLSAAVGLKNAGIHCEVFEAVKEIKPVGAAISIWPNGVKCMKHLGMGDIIESYGGPMHFLAYKDYLRGEDLTQFSLAPLVERTGGRPCPVPALNLQREMLDFWGRDAVQFGKRVTRCEEHADGVRVWFTDGSMAEGDFLIAADGSHSALRPYVLGYTPERRYAGYVNWNGLVEIDEAIAPGNQWTTFVGEGKRVSLMPVSDGRFYFFFDVPLPAGLAEDRSTLRADLSRYFSGWAPQVQKLIAALDPQTTNRIEIHDIEPFERLVRGKVALLGDAGHSTTPDIGQGGCAALEDAVVLGDLFRESRDIAGVLRQYEAQRCDRVRDLVLKARKRCDVTHGKDMALTQAWYQELETETGERIINGLCETIQGGPLG</sequence>
<organism>
    <name type="scientific">Klebsiella oxytoca</name>
    <dbReference type="NCBI Taxonomy" id="571"/>
    <lineage>
        <taxon>Bacteria</taxon>
        <taxon>Pseudomonadati</taxon>
        <taxon>Pseudomonadota</taxon>
        <taxon>Gammaproteobacteria</taxon>
        <taxon>Enterobacterales</taxon>
        <taxon>Enterobacteriaceae</taxon>
        <taxon>Klebsiella/Raoultella group</taxon>
        <taxon>Klebsiella</taxon>
    </lineage>
</organism>